<gene>
    <name evidence="1" type="primary">rpiA</name>
    <name type="ordered locus">CbuG_0294</name>
</gene>
<organism>
    <name type="scientific">Coxiella burnetii (strain CbuG_Q212)</name>
    <name type="common">Coxiella burnetii (strain Q212)</name>
    <dbReference type="NCBI Taxonomy" id="434923"/>
    <lineage>
        <taxon>Bacteria</taxon>
        <taxon>Pseudomonadati</taxon>
        <taxon>Pseudomonadota</taxon>
        <taxon>Gammaproteobacteria</taxon>
        <taxon>Legionellales</taxon>
        <taxon>Coxiellaceae</taxon>
        <taxon>Coxiella</taxon>
    </lineage>
</organism>
<protein>
    <recommendedName>
        <fullName evidence="1">Ribose-5-phosphate isomerase A</fullName>
        <ecNumber evidence="1">5.3.1.6</ecNumber>
    </recommendedName>
    <alternativeName>
        <fullName evidence="1">Phosphoriboisomerase A</fullName>
        <shortName evidence="1">PRI</shortName>
    </alternativeName>
</protein>
<reference key="1">
    <citation type="journal article" date="2009" name="Infect. Immun.">
        <title>Comparative genomics reveal extensive transposon-mediated genomic plasticity and diversity among potential effector proteins within the genus Coxiella.</title>
        <authorList>
            <person name="Beare P.A."/>
            <person name="Unsworth N."/>
            <person name="Andoh M."/>
            <person name="Voth D.E."/>
            <person name="Omsland A."/>
            <person name="Gilk S.D."/>
            <person name="Williams K.P."/>
            <person name="Sobral B.W."/>
            <person name="Kupko J.J. III"/>
            <person name="Porcella S.F."/>
            <person name="Samuel J.E."/>
            <person name="Heinzen R.A."/>
        </authorList>
    </citation>
    <scope>NUCLEOTIDE SEQUENCE [LARGE SCALE GENOMIC DNA]</scope>
    <source>
        <strain>CbuG_Q212</strain>
    </source>
</reference>
<name>RPIA_COXB2</name>
<proteinExistence type="inferred from homology"/>
<feature type="chain" id="PRO_1000097658" description="Ribose-5-phosphate isomerase A">
    <location>
        <begin position="1"/>
        <end position="220"/>
    </location>
</feature>
<feature type="active site" description="Proton acceptor" evidence="1">
    <location>
        <position position="103"/>
    </location>
</feature>
<feature type="binding site" evidence="1">
    <location>
        <begin position="28"/>
        <end position="31"/>
    </location>
    <ligand>
        <name>substrate</name>
    </ligand>
</feature>
<feature type="binding site" evidence="1">
    <location>
        <begin position="81"/>
        <end position="84"/>
    </location>
    <ligand>
        <name>substrate</name>
    </ligand>
</feature>
<feature type="binding site" evidence="1">
    <location>
        <begin position="94"/>
        <end position="97"/>
    </location>
    <ligand>
        <name>substrate</name>
    </ligand>
</feature>
<feature type="binding site" evidence="1">
    <location>
        <position position="121"/>
    </location>
    <ligand>
        <name>substrate</name>
    </ligand>
</feature>
<evidence type="ECO:0000255" key="1">
    <source>
        <dbReference type="HAMAP-Rule" id="MF_00170"/>
    </source>
</evidence>
<sequence length="220" mass="23848">MSKNELKKAAAMEAIQFVKNVNIVGVGTGSTVNYFIDALAEIKHQIEGAVASSVATENRLKEHRIPVVDLNSVSNVDVYVDGADEFNKHFYLTKGGGGALTREKIIAAAAKRFICIVDESKQVDVLGQFPLPIEVIPMARSFVAREIVKLKGDPVYRQGFTTDNGNVILDIHNLTILNPVELEAILNNIPGVIANGLFAQQPADDLLIGTPAGVQLHHRK</sequence>
<keyword id="KW-0413">Isomerase</keyword>
<dbReference type="EC" id="5.3.1.6" evidence="1"/>
<dbReference type="EMBL" id="CP001019">
    <property type="protein sequence ID" value="ACJ17731.1"/>
    <property type="molecule type" value="Genomic_DNA"/>
</dbReference>
<dbReference type="RefSeq" id="WP_005770348.1">
    <property type="nucleotide sequence ID" value="NC_011527.1"/>
</dbReference>
<dbReference type="SMR" id="B6J3K5"/>
<dbReference type="KEGG" id="cbg:CbuG_0294"/>
<dbReference type="HOGENOM" id="CLU_056590_1_1_6"/>
<dbReference type="UniPathway" id="UPA00115">
    <property type="reaction ID" value="UER00412"/>
</dbReference>
<dbReference type="GO" id="GO:0005829">
    <property type="term" value="C:cytosol"/>
    <property type="evidence" value="ECO:0007669"/>
    <property type="project" value="TreeGrafter"/>
</dbReference>
<dbReference type="GO" id="GO:0004751">
    <property type="term" value="F:ribose-5-phosphate isomerase activity"/>
    <property type="evidence" value="ECO:0007669"/>
    <property type="project" value="UniProtKB-UniRule"/>
</dbReference>
<dbReference type="GO" id="GO:0006014">
    <property type="term" value="P:D-ribose metabolic process"/>
    <property type="evidence" value="ECO:0007669"/>
    <property type="project" value="TreeGrafter"/>
</dbReference>
<dbReference type="GO" id="GO:0009052">
    <property type="term" value="P:pentose-phosphate shunt, non-oxidative branch"/>
    <property type="evidence" value="ECO:0007669"/>
    <property type="project" value="UniProtKB-UniRule"/>
</dbReference>
<dbReference type="CDD" id="cd01398">
    <property type="entry name" value="RPI_A"/>
    <property type="match status" value="1"/>
</dbReference>
<dbReference type="FunFam" id="3.30.70.260:FF:000004">
    <property type="entry name" value="Ribose-5-phosphate isomerase A"/>
    <property type="match status" value="1"/>
</dbReference>
<dbReference type="FunFam" id="3.40.50.1360:FF:000001">
    <property type="entry name" value="Ribose-5-phosphate isomerase A"/>
    <property type="match status" value="1"/>
</dbReference>
<dbReference type="Gene3D" id="3.30.70.260">
    <property type="match status" value="1"/>
</dbReference>
<dbReference type="Gene3D" id="3.40.50.1360">
    <property type="match status" value="1"/>
</dbReference>
<dbReference type="HAMAP" id="MF_00170">
    <property type="entry name" value="Rib_5P_isom_A"/>
    <property type="match status" value="1"/>
</dbReference>
<dbReference type="InterPro" id="IPR037171">
    <property type="entry name" value="NagB/RpiA_transferase-like"/>
</dbReference>
<dbReference type="InterPro" id="IPR020672">
    <property type="entry name" value="Ribose5P_isomerase_typA_subgr"/>
</dbReference>
<dbReference type="InterPro" id="IPR004788">
    <property type="entry name" value="Ribose5P_isomerase_type_A"/>
</dbReference>
<dbReference type="NCBIfam" id="NF001924">
    <property type="entry name" value="PRK00702.1"/>
    <property type="match status" value="1"/>
</dbReference>
<dbReference type="NCBIfam" id="TIGR00021">
    <property type="entry name" value="rpiA"/>
    <property type="match status" value="1"/>
</dbReference>
<dbReference type="PANTHER" id="PTHR11934">
    <property type="entry name" value="RIBOSE-5-PHOSPHATE ISOMERASE"/>
    <property type="match status" value="1"/>
</dbReference>
<dbReference type="PANTHER" id="PTHR11934:SF0">
    <property type="entry name" value="RIBOSE-5-PHOSPHATE ISOMERASE"/>
    <property type="match status" value="1"/>
</dbReference>
<dbReference type="Pfam" id="PF06026">
    <property type="entry name" value="Rib_5-P_isom_A"/>
    <property type="match status" value="1"/>
</dbReference>
<dbReference type="SUPFAM" id="SSF75445">
    <property type="entry name" value="D-ribose-5-phosphate isomerase (RpiA), lid domain"/>
    <property type="match status" value="1"/>
</dbReference>
<dbReference type="SUPFAM" id="SSF100950">
    <property type="entry name" value="NagB/RpiA/CoA transferase-like"/>
    <property type="match status" value="1"/>
</dbReference>
<accession>B6J3K5</accession>
<comment type="function">
    <text evidence="1">Catalyzes the reversible conversion of ribose-5-phosphate to ribulose 5-phosphate.</text>
</comment>
<comment type="catalytic activity">
    <reaction evidence="1">
        <text>aldehydo-D-ribose 5-phosphate = D-ribulose 5-phosphate</text>
        <dbReference type="Rhea" id="RHEA:14657"/>
        <dbReference type="ChEBI" id="CHEBI:58121"/>
        <dbReference type="ChEBI" id="CHEBI:58273"/>
        <dbReference type="EC" id="5.3.1.6"/>
    </reaction>
</comment>
<comment type="pathway">
    <text evidence="1">Carbohydrate degradation; pentose phosphate pathway; D-ribose 5-phosphate from D-ribulose 5-phosphate (non-oxidative stage): step 1/1.</text>
</comment>
<comment type="subunit">
    <text evidence="1">Homodimer.</text>
</comment>
<comment type="similarity">
    <text evidence="1">Belongs to the ribose 5-phosphate isomerase family.</text>
</comment>